<comment type="function">
    <text evidence="1">RNaseP catalyzes the removal of the 5'-leader sequence from pre-tRNA to produce the mature 5'-terminus. It can also cleave other RNA substrates such as 4.5S RNA. The protein component plays an auxiliary but essential role in vivo by binding to the 5'-leader sequence and broadening the substrate specificity of the ribozyme.</text>
</comment>
<comment type="catalytic activity">
    <reaction evidence="1">
        <text>Endonucleolytic cleavage of RNA, removing 5'-extranucleotides from tRNA precursor.</text>
        <dbReference type="EC" id="3.1.26.5"/>
    </reaction>
</comment>
<comment type="subunit">
    <text evidence="1">Consists of a catalytic RNA component (M1 or rnpB) and a protein subunit.</text>
</comment>
<comment type="similarity">
    <text evidence="1">Belongs to the RnpA family.</text>
</comment>
<gene>
    <name evidence="1" type="primary">rnpA</name>
    <name type="ordered locus">BMA10229_A2239</name>
</gene>
<organism>
    <name type="scientific">Burkholderia mallei (strain NCTC 10229)</name>
    <dbReference type="NCBI Taxonomy" id="412022"/>
    <lineage>
        <taxon>Bacteria</taxon>
        <taxon>Pseudomonadati</taxon>
        <taxon>Pseudomonadota</taxon>
        <taxon>Betaproteobacteria</taxon>
        <taxon>Burkholderiales</taxon>
        <taxon>Burkholderiaceae</taxon>
        <taxon>Burkholderia</taxon>
        <taxon>pseudomallei group</taxon>
    </lineage>
</organism>
<name>RNPA_BURM9</name>
<keyword id="KW-0255">Endonuclease</keyword>
<keyword id="KW-0378">Hydrolase</keyword>
<keyword id="KW-0540">Nuclease</keyword>
<keyword id="KW-0694">RNA-binding</keyword>
<keyword id="KW-0819">tRNA processing</keyword>
<protein>
    <recommendedName>
        <fullName evidence="1">Ribonuclease P protein component</fullName>
        <shortName evidence="1">RNase P protein</shortName>
        <shortName evidence="1">RNaseP protein</shortName>
        <ecNumber evidence="1">3.1.26.5</ecNumber>
    </recommendedName>
    <alternativeName>
        <fullName evidence="1">Protein C5</fullName>
    </alternativeName>
</protein>
<feature type="chain" id="PRO_1000021382" description="Ribonuclease P protein component">
    <location>
        <begin position="1"/>
        <end position="136"/>
    </location>
</feature>
<sequence length="136" mass="15247">MQASAAFPKAARLLKTDEFSSVFRLRPWRRTAHFVIYGKPTGRDARLGLVIGKKYAARAVTRNLVKRLAREAFRTRRAEFAGWDILLRLHTRFDKKAMPSAASAPLAALCAGEIRELLDRAAREVARRNGAKPASE</sequence>
<proteinExistence type="inferred from homology"/>
<dbReference type="EC" id="3.1.26.5" evidence="1"/>
<dbReference type="EMBL" id="CP000546">
    <property type="protein sequence ID" value="ABN03479.1"/>
    <property type="molecule type" value="Genomic_DNA"/>
</dbReference>
<dbReference type="SMR" id="A2S8D4"/>
<dbReference type="KEGG" id="bml:BMA10229_A2239"/>
<dbReference type="HOGENOM" id="CLU_117179_11_1_4"/>
<dbReference type="Proteomes" id="UP000002283">
    <property type="component" value="Chromosome I"/>
</dbReference>
<dbReference type="GO" id="GO:0030677">
    <property type="term" value="C:ribonuclease P complex"/>
    <property type="evidence" value="ECO:0007669"/>
    <property type="project" value="TreeGrafter"/>
</dbReference>
<dbReference type="GO" id="GO:0042781">
    <property type="term" value="F:3'-tRNA processing endoribonuclease activity"/>
    <property type="evidence" value="ECO:0007669"/>
    <property type="project" value="TreeGrafter"/>
</dbReference>
<dbReference type="GO" id="GO:0004526">
    <property type="term" value="F:ribonuclease P activity"/>
    <property type="evidence" value="ECO:0007669"/>
    <property type="project" value="UniProtKB-UniRule"/>
</dbReference>
<dbReference type="GO" id="GO:0000049">
    <property type="term" value="F:tRNA binding"/>
    <property type="evidence" value="ECO:0007669"/>
    <property type="project" value="UniProtKB-UniRule"/>
</dbReference>
<dbReference type="GO" id="GO:0001682">
    <property type="term" value="P:tRNA 5'-leader removal"/>
    <property type="evidence" value="ECO:0007669"/>
    <property type="project" value="UniProtKB-UniRule"/>
</dbReference>
<dbReference type="Gene3D" id="3.30.230.10">
    <property type="match status" value="1"/>
</dbReference>
<dbReference type="HAMAP" id="MF_00227">
    <property type="entry name" value="RNase_P"/>
    <property type="match status" value="1"/>
</dbReference>
<dbReference type="InterPro" id="IPR020568">
    <property type="entry name" value="Ribosomal_Su5_D2-typ_SF"/>
</dbReference>
<dbReference type="InterPro" id="IPR014721">
    <property type="entry name" value="Ribsml_uS5_D2-typ_fold_subgr"/>
</dbReference>
<dbReference type="InterPro" id="IPR000100">
    <property type="entry name" value="RNase_P"/>
</dbReference>
<dbReference type="InterPro" id="IPR020539">
    <property type="entry name" value="RNase_P_CS"/>
</dbReference>
<dbReference type="NCBIfam" id="TIGR00188">
    <property type="entry name" value="rnpA"/>
    <property type="match status" value="1"/>
</dbReference>
<dbReference type="PANTHER" id="PTHR33992">
    <property type="entry name" value="RIBONUCLEASE P PROTEIN COMPONENT"/>
    <property type="match status" value="1"/>
</dbReference>
<dbReference type="PANTHER" id="PTHR33992:SF1">
    <property type="entry name" value="RIBONUCLEASE P PROTEIN COMPONENT"/>
    <property type="match status" value="1"/>
</dbReference>
<dbReference type="Pfam" id="PF00825">
    <property type="entry name" value="Ribonuclease_P"/>
    <property type="match status" value="1"/>
</dbReference>
<dbReference type="SUPFAM" id="SSF54211">
    <property type="entry name" value="Ribosomal protein S5 domain 2-like"/>
    <property type="match status" value="1"/>
</dbReference>
<dbReference type="PROSITE" id="PS00648">
    <property type="entry name" value="RIBONUCLEASE_P"/>
    <property type="match status" value="1"/>
</dbReference>
<accession>A2S8D4</accession>
<reference key="1">
    <citation type="journal article" date="2010" name="Genome Biol. Evol.">
        <title>Continuing evolution of Burkholderia mallei through genome reduction and large-scale rearrangements.</title>
        <authorList>
            <person name="Losada L."/>
            <person name="Ronning C.M."/>
            <person name="DeShazer D."/>
            <person name="Woods D."/>
            <person name="Fedorova N."/>
            <person name="Kim H.S."/>
            <person name="Shabalina S.A."/>
            <person name="Pearson T.R."/>
            <person name="Brinkac L."/>
            <person name="Tan P."/>
            <person name="Nandi T."/>
            <person name="Crabtree J."/>
            <person name="Badger J."/>
            <person name="Beckstrom-Sternberg S."/>
            <person name="Saqib M."/>
            <person name="Schutzer S.E."/>
            <person name="Keim P."/>
            <person name="Nierman W.C."/>
        </authorList>
    </citation>
    <scope>NUCLEOTIDE SEQUENCE [LARGE SCALE GENOMIC DNA]</scope>
    <source>
        <strain>NCTC 10229</strain>
    </source>
</reference>
<evidence type="ECO:0000255" key="1">
    <source>
        <dbReference type="HAMAP-Rule" id="MF_00227"/>
    </source>
</evidence>